<proteinExistence type="inferred from homology"/>
<reference key="1">
    <citation type="journal article" date="1997" name="Nature">
        <title>Molecular basis of symbiosis between Rhizobium and legumes.</title>
        <authorList>
            <person name="Freiberg C.A."/>
            <person name="Fellay R."/>
            <person name="Bairoch A."/>
            <person name="Broughton W.J."/>
            <person name="Rosenthal A."/>
            <person name="Perret X."/>
        </authorList>
    </citation>
    <scope>NUCLEOTIDE SEQUENCE [LARGE SCALE GENOMIC DNA]</scope>
    <source>
        <strain>NBRC 101917 / NGR234</strain>
    </source>
</reference>
<reference key="2">
    <citation type="journal article" date="2009" name="Appl. Environ. Microbiol.">
        <title>Rhizobium sp. strain NGR234 possesses a remarkable number of secretion systems.</title>
        <authorList>
            <person name="Schmeisser C."/>
            <person name="Liesegang H."/>
            <person name="Krysciak D."/>
            <person name="Bakkou N."/>
            <person name="Le Quere A."/>
            <person name="Wollherr A."/>
            <person name="Heinemeyer I."/>
            <person name="Morgenstern B."/>
            <person name="Pommerening-Roeser A."/>
            <person name="Flores M."/>
            <person name="Palacios R."/>
            <person name="Brenner S."/>
            <person name="Gottschalk G."/>
            <person name="Schmitz R.A."/>
            <person name="Broughton W.J."/>
            <person name="Perret X."/>
            <person name="Strittmatter A.W."/>
            <person name="Streit W.R."/>
        </authorList>
    </citation>
    <scope>NUCLEOTIDE SEQUENCE [LARGE SCALE GENOMIC DNA]</scope>
    <source>
        <strain>NBRC 101917 / NGR234</strain>
    </source>
</reference>
<protein>
    <recommendedName>
        <fullName>Probable metalloprotease y4qB</fullName>
    </recommendedName>
</protein>
<keyword id="KW-0378">Hydrolase</keyword>
<keyword id="KW-0479">Metal-binding</keyword>
<keyword id="KW-0482">Metalloprotease</keyword>
<keyword id="KW-0614">Plasmid</keyword>
<keyword id="KW-0645">Protease</keyword>
<keyword id="KW-1185">Reference proteome</keyword>
<keyword id="KW-0862">Zinc</keyword>
<sequence>MPKLIWIPESVVEAMLKDASRWHDLETGGTFMGYWSDANVAVITKMIDGGSEAIRTRKSFSPDREWEQSEIDRHYRVSGRVDTYIGDWHTHPNAQSGEPSWTDRRCLRTIIRSPEARAPRPVMILLCGGPENWLPHAWIGQLTRRALLFERVETTAATISTYKT</sequence>
<accession>P55623</accession>
<geneLocation type="plasmid">
    <name>sym pNGR234a</name>
</geneLocation>
<name>Y4QB_SINFN</name>
<feature type="chain" id="PRO_0000200937" description="Probable metalloprotease y4qB">
    <location>
        <begin position="1"/>
        <end position="164"/>
    </location>
</feature>
<feature type="domain" description="MPN" evidence="2">
    <location>
        <begin position="5"/>
        <end position="142"/>
    </location>
</feature>
<feature type="binding site" evidence="1">
    <location>
        <position position="89"/>
    </location>
    <ligand>
        <name>Zn(2+)</name>
        <dbReference type="ChEBI" id="CHEBI:29105"/>
        <note>catalytic</note>
    </ligand>
</feature>
<feature type="binding site" evidence="1">
    <location>
        <position position="91"/>
    </location>
    <ligand>
        <name>Zn(2+)</name>
        <dbReference type="ChEBI" id="CHEBI:29105"/>
        <note>catalytic</note>
    </ligand>
</feature>
<feature type="binding site" evidence="1">
    <location>
        <position position="103"/>
    </location>
    <ligand>
        <name>Zn(2+)</name>
        <dbReference type="ChEBI" id="CHEBI:29105"/>
        <note>catalytic</note>
    </ligand>
</feature>
<organism>
    <name type="scientific">Sinorhizobium fredii (strain NBRC 101917 / NGR234)</name>
    <dbReference type="NCBI Taxonomy" id="394"/>
    <lineage>
        <taxon>Bacteria</taxon>
        <taxon>Pseudomonadati</taxon>
        <taxon>Pseudomonadota</taxon>
        <taxon>Alphaproteobacteria</taxon>
        <taxon>Hyphomicrobiales</taxon>
        <taxon>Rhizobiaceae</taxon>
        <taxon>Sinorhizobium/Ensifer group</taxon>
        <taxon>Sinorhizobium</taxon>
    </lineage>
</organism>
<dbReference type="EMBL" id="U00090">
    <property type="protein sequence ID" value="AAB91826.1"/>
    <property type="molecule type" value="Genomic_DNA"/>
</dbReference>
<dbReference type="RefSeq" id="NP_444029.1">
    <property type="nucleotide sequence ID" value="NC_000914.2"/>
</dbReference>
<dbReference type="RefSeq" id="WP_010875230.1">
    <property type="nucleotide sequence ID" value="NC_000914.2"/>
</dbReference>
<dbReference type="SMR" id="P55623"/>
<dbReference type="KEGG" id="rhi:NGR_a01960"/>
<dbReference type="eggNOG" id="ENOG5030HPW">
    <property type="taxonomic scope" value="Bacteria"/>
</dbReference>
<dbReference type="HOGENOM" id="CLU_123228_0_0_5"/>
<dbReference type="OrthoDB" id="7848394at2"/>
<dbReference type="Proteomes" id="UP000001054">
    <property type="component" value="Plasmid pNGR234a"/>
</dbReference>
<dbReference type="GO" id="GO:0046872">
    <property type="term" value="F:metal ion binding"/>
    <property type="evidence" value="ECO:0007669"/>
    <property type="project" value="UniProtKB-KW"/>
</dbReference>
<dbReference type="GO" id="GO:0008237">
    <property type="term" value="F:metallopeptidase activity"/>
    <property type="evidence" value="ECO:0007669"/>
    <property type="project" value="UniProtKB-KW"/>
</dbReference>
<dbReference type="GO" id="GO:0006508">
    <property type="term" value="P:proteolysis"/>
    <property type="evidence" value="ECO:0007669"/>
    <property type="project" value="UniProtKB-KW"/>
</dbReference>
<dbReference type="Gene3D" id="3.40.140.10">
    <property type="entry name" value="Cytidine Deaminase, domain 2"/>
    <property type="match status" value="1"/>
</dbReference>
<dbReference type="InterPro" id="IPR011952">
    <property type="entry name" value="CAP3"/>
</dbReference>
<dbReference type="InterPro" id="IPR028090">
    <property type="entry name" value="JAB_dom_prok"/>
</dbReference>
<dbReference type="InterPro" id="IPR037518">
    <property type="entry name" value="MPN"/>
</dbReference>
<dbReference type="NCBIfam" id="TIGR02256">
    <property type="entry name" value="ICE_VC0181"/>
    <property type="match status" value="1"/>
</dbReference>
<dbReference type="Pfam" id="PF14464">
    <property type="entry name" value="Prok-JAB"/>
    <property type="match status" value="1"/>
</dbReference>
<dbReference type="PIRSF" id="PIRSF028170">
    <property type="entry name" value="CHP02256"/>
    <property type="match status" value="1"/>
</dbReference>
<dbReference type="SUPFAM" id="SSF102712">
    <property type="entry name" value="JAB1/MPN domain"/>
    <property type="match status" value="1"/>
</dbReference>
<dbReference type="PROSITE" id="PS50249">
    <property type="entry name" value="MPN"/>
    <property type="match status" value="1"/>
</dbReference>
<gene>
    <name type="ordered locus">NGR_a01960</name>
    <name type="ORF">y4qB</name>
</gene>
<evidence type="ECO:0000250" key="1">
    <source>
        <dbReference type="UniProtKB" id="Q8U1Y4"/>
    </source>
</evidence>
<evidence type="ECO:0000255" key="2">
    <source>
        <dbReference type="PROSITE-ProRule" id="PRU01182"/>
    </source>
</evidence>
<evidence type="ECO:0000305" key="3"/>
<comment type="similarity">
    <text evidence="3">Belongs to the peptidase M67B family.</text>
</comment>